<protein>
    <recommendedName>
        <fullName>Profilin-3</fullName>
    </recommendedName>
    <alternativeName>
        <fullName>Pollen allergen Ole e 2</fullName>
    </alternativeName>
    <allergenName>Ole e 2</allergenName>
</protein>
<reference key="1">
    <citation type="journal article" date="2012" name="PLoS ONE">
        <title>Characterization of profilin polymorphism in pollen with a focus on multifunctionality.</title>
        <authorList>
            <person name="Jimenez-Lopez J.C."/>
            <person name="Morales S."/>
            <person name="Castro A.J."/>
            <person name="Volkmann D."/>
            <person name="Rodriguez-Garcia M.I."/>
            <person name="Alche Jde D."/>
        </authorList>
    </citation>
    <scope>NUCLEOTIDE SEQUENCE [MRNA]</scope>
    <scope>POLYMORPHISM</scope>
    <source>
        <strain>cv. Blanqueta</strain>
    </source>
</reference>
<reference key="2">
    <citation type="journal article" date="2013" name="PLoS ONE">
        <title>Analysis of the effects of polymorphism on pollen profilin structural functionality and the generation of conformational, T- and B-cell epitopes.</title>
        <authorList>
            <person name="Jimenez-Lopez J.C."/>
            <person name="Rodriguez-Garcia M.I."/>
            <person name="Alche J.D."/>
        </authorList>
    </citation>
    <scope>3D-STRUCTURE MODELING</scope>
    <scope>DISULFIDE BOND</scope>
</reference>
<accession>A4GDR9</accession>
<evidence type="ECO:0000250" key="1"/>
<evidence type="ECO:0000305" key="2"/>
<evidence type="ECO:0000305" key="3">
    <source>
    </source>
</evidence>
<dbReference type="EMBL" id="DQ138337">
    <property type="protein sequence ID" value="AAZ30415.1"/>
    <property type="molecule type" value="mRNA"/>
</dbReference>
<dbReference type="SMR" id="A4GDR9"/>
<dbReference type="Allergome" id="490">
    <property type="allergen name" value="Ole e 2"/>
</dbReference>
<dbReference type="GO" id="GO:0005938">
    <property type="term" value="C:cell cortex"/>
    <property type="evidence" value="ECO:0007669"/>
    <property type="project" value="TreeGrafter"/>
</dbReference>
<dbReference type="GO" id="GO:0005856">
    <property type="term" value="C:cytoskeleton"/>
    <property type="evidence" value="ECO:0007669"/>
    <property type="project" value="UniProtKB-SubCell"/>
</dbReference>
<dbReference type="GO" id="GO:0003785">
    <property type="term" value="F:actin monomer binding"/>
    <property type="evidence" value="ECO:0007669"/>
    <property type="project" value="TreeGrafter"/>
</dbReference>
<dbReference type="CDD" id="cd00148">
    <property type="entry name" value="PROF"/>
    <property type="match status" value="1"/>
</dbReference>
<dbReference type="FunFam" id="3.30.450.30:FF:000001">
    <property type="entry name" value="Profilin"/>
    <property type="match status" value="1"/>
</dbReference>
<dbReference type="Gene3D" id="3.30.450.30">
    <property type="entry name" value="Dynein light chain 2a, cytoplasmic"/>
    <property type="match status" value="1"/>
</dbReference>
<dbReference type="InterPro" id="IPR048278">
    <property type="entry name" value="PFN"/>
</dbReference>
<dbReference type="InterPro" id="IPR005455">
    <property type="entry name" value="PFN_euk"/>
</dbReference>
<dbReference type="InterPro" id="IPR036140">
    <property type="entry name" value="PFN_sf"/>
</dbReference>
<dbReference type="InterPro" id="IPR027310">
    <property type="entry name" value="Profilin_CS"/>
</dbReference>
<dbReference type="PANTHER" id="PTHR11604">
    <property type="entry name" value="PROFILIN"/>
    <property type="match status" value="1"/>
</dbReference>
<dbReference type="PANTHER" id="PTHR11604:SF25">
    <property type="entry name" value="PROFILIN-5"/>
    <property type="match status" value="1"/>
</dbReference>
<dbReference type="Pfam" id="PF00235">
    <property type="entry name" value="Profilin"/>
    <property type="match status" value="1"/>
</dbReference>
<dbReference type="PRINTS" id="PR00392">
    <property type="entry name" value="PROFILIN"/>
</dbReference>
<dbReference type="PRINTS" id="PR01640">
    <property type="entry name" value="PROFILINPLNT"/>
</dbReference>
<dbReference type="SMART" id="SM00392">
    <property type="entry name" value="PROF"/>
    <property type="match status" value="1"/>
</dbReference>
<dbReference type="SUPFAM" id="SSF55770">
    <property type="entry name" value="Profilin (actin-binding protein)"/>
    <property type="match status" value="1"/>
</dbReference>
<dbReference type="PROSITE" id="PS00414">
    <property type="entry name" value="PROFILIN"/>
    <property type="match status" value="1"/>
</dbReference>
<proteinExistence type="evidence at protein level"/>
<feature type="initiator methionine" description="Removed" evidence="1">
    <location>
        <position position="1"/>
    </location>
</feature>
<feature type="chain" id="PRO_0000425016" description="Profilin-3">
    <location>
        <begin position="2"/>
        <end position="134"/>
    </location>
</feature>
<feature type="short sequence motif" description="Involved in PIP2 interaction">
    <location>
        <begin position="84"/>
        <end position="100"/>
    </location>
</feature>
<feature type="modified residue" description="Phosphothreonine" evidence="1">
    <location>
        <position position="114"/>
    </location>
</feature>
<feature type="disulfide bond" evidence="3">
    <location>
        <begin position="13"/>
        <end position="118"/>
    </location>
</feature>
<name>PROAY_OLEEU</name>
<sequence length="134" mass="14415">MSWQAYVDDHLMCDIEGHEGHRLTAAAIVGHDGSVWAQSATFPQFKPEEMNGTMTDFNEPGHLAPTGLHLGGTKYMVIQGEAGAVIRGKKGSGGITIKKTGQALVFGIYEEPVTPGQCNMVVERLGDYLLEQGL</sequence>
<organism>
    <name type="scientific">Olea europaea</name>
    <name type="common">Common olive</name>
    <dbReference type="NCBI Taxonomy" id="4146"/>
    <lineage>
        <taxon>Eukaryota</taxon>
        <taxon>Viridiplantae</taxon>
        <taxon>Streptophyta</taxon>
        <taxon>Embryophyta</taxon>
        <taxon>Tracheophyta</taxon>
        <taxon>Spermatophyta</taxon>
        <taxon>Magnoliopsida</taxon>
        <taxon>eudicotyledons</taxon>
        <taxon>Gunneridae</taxon>
        <taxon>Pentapetalae</taxon>
        <taxon>asterids</taxon>
        <taxon>lamiids</taxon>
        <taxon>Lamiales</taxon>
        <taxon>Oleaceae</taxon>
        <taxon>Oleeae</taxon>
        <taxon>Olea</taxon>
    </lineage>
</organism>
<keyword id="KW-0009">Actin-binding</keyword>
<keyword id="KW-0020">Allergen</keyword>
<keyword id="KW-0963">Cytoplasm</keyword>
<keyword id="KW-0206">Cytoskeleton</keyword>
<keyword id="KW-1015">Disulfide bond</keyword>
<keyword id="KW-0597">Phosphoprotein</keyword>
<comment type="function">
    <text evidence="1">Binds to actin and affects the structure of the cytoskeleton. At high concentrations, profilin prevents the polymerization of actin, whereas it enhances it at low concentrations (By similarity).</text>
</comment>
<comment type="subunit">
    <text evidence="1">Occurs in many kinds of cells as a complex with monomeric actin in a 1:1 ratio.</text>
</comment>
<comment type="subcellular location">
    <subcellularLocation>
        <location evidence="1">Cytoplasm</location>
        <location evidence="1">Cytoskeleton</location>
    </subcellularLocation>
</comment>
<comment type="PTM">
    <text evidence="1">Phosphorylated by MAP kinases.</text>
</comment>
<comment type="polymorphism">
    <text>Several isoforms of the allergen exist due to polymorphism.</text>
</comment>
<comment type="allergen">
    <text>Causes an allergic reaction in human.</text>
</comment>
<comment type="miscellaneous">
    <text evidence="3">The variability of the residues taking part of IgE-binding epitopes might be responsible of the difference in cross-reactivity among olive pollen cultivars, and between distantly related pollen species, leading to a variable range of allergy reactions among atopic patients.</text>
</comment>
<comment type="similarity">
    <text evidence="2">Belongs to the profilin family.</text>
</comment>